<feature type="chain" id="PRO_0000161736" description="DNA ligase">
    <location>
        <begin position="1"/>
        <end position="669"/>
    </location>
</feature>
<feature type="domain" description="BRCT" evidence="1">
    <location>
        <begin position="591"/>
        <end position="669"/>
    </location>
</feature>
<feature type="active site" description="N6-AMP-lysine intermediate" evidence="1">
    <location>
        <position position="115"/>
    </location>
</feature>
<feature type="binding site" evidence="1">
    <location>
        <begin position="34"/>
        <end position="38"/>
    </location>
    <ligand>
        <name>NAD(+)</name>
        <dbReference type="ChEBI" id="CHEBI:57540"/>
    </ligand>
</feature>
<feature type="binding site" evidence="1">
    <location>
        <begin position="83"/>
        <end position="84"/>
    </location>
    <ligand>
        <name>NAD(+)</name>
        <dbReference type="ChEBI" id="CHEBI:57540"/>
    </ligand>
</feature>
<feature type="binding site" evidence="1">
    <location>
        <position position="113"/>
    </location>
    <ligand>
        <name>NAD(+)</name>
        <dbReference type="ChEBI" id="CHEBI:57540"/>
    </ligand>
</feature>
<feature type="binding site" evidence="1">
    <location>
        <position position="136"/>
    </location>
    <ligand>
        <name>NAD(+)</name>
        <dbReference type="ChEBI" id="CHEBI:57540"/>
    </ligand>
</feature>
<feature type="binding site" evidence="1">
    <location>
        <position position="170"/>
    </location>
    <ligand>
        <name>NAD(+)</name>
        <dbReference type="ChEBI" id="CHEBI:57540"/>
    </ligand>
</feature>
<feature type="binding site" evidence="1">
    <location>
        <position position="286"/>
    </location>
    <ligand>
        <name>NAD(+)</name>
        <dbReference type="ChEBI" id="CHEBI:57540"/>
    </ligand>
</feature>
<feature type="binding site" evidence="1">
    <location>
        <position position="310"/>
    </location>
    <ligand>
        <name>NAD(+)</name>
        <dbReference type="ChEBI" id="CHEBI:57540"/>
    </ligand>
</feature>
<feature type="binding site" evidence="1">
    <location>
        <position position="404"/>
    </location>
    <ligand>
        <name>Zn(2+)</name>
        <dbReference type="ChEBI" id="CHEBI:29105"/>
    </ligand>
</feature>
<feature type="binding site" evidence="1">
    <location>
        <position position="407"/>
    </location>
    <ligand>
        <name>Zn(2+)</name>
        <dbReference type="ChEBI" id="CHEBI:29105"/>
    </ligand>
</feature>
<feature type="binding site" evidence="1">
    <location>
        <position position="422"/>
    </location>
    <ligand>
        <name>Zn(2+)</name>
        <dbReference type="ChEBI" id="CHEBI:29105"/>
    </ligand>
</feature>
<feature type="binding site" evidence="1">
    <location>
        <position position="427"/>
    </location>
    <ligand>
        <name>Zn(2+)</name>
        <dbReference type="ChEBI" id="CHEBI:29105"/>
    </ligand>
</feature>
<evidence type="ECO:0000255" key="1">
    <source>
        <dbReference type="HAMAP-Rule" id="MF_01588"/>
    </source>
</evidence>
<gene>
    <name evidence="1" type="primary">ligA</name>
    <name type="synonym">lig</name>
    <name type="ordered locus">BH0649</name>
</gene>
<keyword id="KW-0227">DNA damage</keyword>
<keyword id="KW-0234">DNA repair</keyword>
<keyword id="KW-0235">DNA replication</keyword>
<keyword id="KW-0436">Ligase</keyword>
<keyword id="KW-0460">Magnesium</keyword>
<keyword id="KW-0464">Manganese</keyword>
<keyword id="KW-0479">Metal-binding</keyword>
<keyword id="KW-0520">NAD</keyword>
<keyword id="KW-1185">Reference proteome</keyword>
<keyword id="KW-0862">Zinc</keyword>
<protein>
    <recommendedName>
        <fullName evidence="1">DNA ligase</fullName>
        <ecNumber evidence="1">6.5.1.2</ecNumber>
    </recommendedName>
    <alternativeName>
        <fullName evidence="1">Polydeoxyribonucleotide synthase [NAD(+)]</fullName>
    </alternativeName>
</protein>
<reference key="1">
    <citation type="journal article" date="2000" name="Nucleic Acids Res.">
        <title>Complete genome sequence of the alkaliphilic bacterium Bacillus halodurans and genomic sequence comparison with Bacillus subtilis.</title>
        <authorList>
            <person name="Takami H."/>
            <person name="Nakasone K."/>
            <person name="Takaki Y."/>
            <person name="Maeno G."/>
            <person name="Sasaki R."/>
            <person name="Masui N."/>
            <person name="Fuji F."/>
            <person name="Hirama C."/>
            <person name="Nakamura Y."/>
            <person name="Ogasawara N."/>
            <person name="Kuhara S."/>
            <person name="Horikoshi K."/>
        </authorList>
    </citation>
    <scope>NUCLEOTIDE SEQUENCE [LARGE SCALE GENOMIC DNA]</scope>
    <source>
        <strain>ATCC BAA-125 / DSM 18197 / FERM 7344 / JCM 9153 / C-125</strain>
    </source>
</reference>
<dbReference type="EC" id="6.5.1.2" evidence="1"/>
<dbReference type="EMBL" id="BA000004">
    <property type="protein sequence ID" value="BAB04368.1"/>
    <property type="molecule type" value="Genomic_DNA"/>
</dbReference>
<dbReference type="PIR" id="A83731">
    <property type="entry name" value="A83731"/>
</dbReference>
<dbReference type="RefSeq" id="WP_010896825.1">
    <property type="nucleotide sequence ID" value="NC_002570.2"/>
</dbReference>
<dbReference type="SMR" id="Q9KF37"/>
<dbReference type="STRING" id="272558.gene:10726523"/>
<dbReference type="KEGG" id="bha:BH0649"/>
<dbReference type="eggNOG" id="COG0272">
    <property type="taxonomic scope" value="Bacteria"/>
</dbReference>
<dbReference type="HOGENOM" id="CLU_007764_2_1_9"/>
<dbReference type="OrthoDB" id="9759736at2"/>
<dbReference type="Proteomes" id="UP000001258">
    <property type="component" value="Chromosome"/>
</dbReference>
<dbReference type="GO" id="GO:0005829">
    <property type="term" value="C:cytosol"/>
    <property type="evidence" value="ECO:0007669"/>
    <property type="project" value="TreeGrafter"/>
</dbReference>
<dbReference type="GO" id="GO:0003677">
    <property type="term" value="F:DNA binding"/>
    <property type="evidence" value="ECO:0007669"/>
    <property type="project" value="InterPro"/>
</dbReference>
<dbReference type="GO" id="GO:0003911">
    <property type="term" value="F:DNA ligase (NAD+) activity"/>
    <property type="evidence" value="ECO:0007669"/>
    <property type="project" value="UniProtKB-UniRule"/>
</dbReference>
<dbReference type="GO" id="GO:0046872">
    <property type="term" value="F:metal ion binding"/>
    <property type="evidence" value="ECO:0007669"/>
    <property type="project" value="UniProtKB-KW"/>
</dbReference>
<dbReference type="GO" id="GO:0006281">
    <property type="term" value="P:DNA repair"/>
    <property type="evidence" value="ECO:0007669"/>
    <property type="project" value="UniProtKB-KW"/>
</dbReference>
<dbReference type="GO" id="GO:0006260">
    <property type="term" value="P:DNA replication"/>
    <property type="evidence" value="ECO:0007669"/>
    <property type="project" value="UniProtKB-KW"/>
</dbReference>
<dbReference type="CDD" id="cd17748">
    <property type="entry name" value="BRCT_DNA_ligase_like"/>
    <property type="match status" value="1"/>
</dbReference>
<dbReference type="CDD" id="cd00114">
    <property type="entry name" value="LIGANc"/>
    <property type="match status" value="1"/>
</dbReference>
<dbReference type="FunFam" id="1.10.150.20:FF:000006">
    <property type="entry name" value="DNA ligase"/>
    <property type="match status" value="1"/>
</dbReference>
<dbReference type="FunFam" id="1.10.150.20:FF:000007">
    <property type="entry name" value="DNA ligase"/>
    <property type="match status" value="1"/>
</dbReference>
<dbReference type="FunFam" id="1.10.287.610:FF:000002">
    <property type="entry name" value="DNA ligase"/>
    <property type="match status" value="1"/>
</dbReference>
<dbReference type="FunFam" id="2.40.50.140:FF:000012">
    <property type="entry name" value="DNA ligase"/>
    <property type="match status" value="1"/>
</dbReference>
<dbReference type="FunFam" id="3.30.470.30:FF:000001">
    <property type="entry name" value="DNA ligase"/>
    <property type="match status" value="1"/>
</dbReference>
<dbReference type="FunFam" id="6.20.10.30:FF:000002">
    <property type="entry name" value="DNA ligase"/>
    <property type="match status" value="1"/>
</dbReference>
<dbReference type="Gene3D" id="6.20.10.30">
    <property type="match status" value="1"/>
</dbReference>
<dbReference type="Gene3D" id="1.10.150.20">
    <property type="entry name" value="5' to 3' exonuclease, C-terminal subdomain"/>
    <property type="match status" value="2"/>
</dbReference>
<dbReference type="Gene3D" id="3.40.50.10190">
    <property type="entry name" value="BRCT domain"/>
    <property type="match status" value="1"/>
</dbReference>
<dbReference type="Gene3D" id="3.30.470.30">
    <property type="entry name" value="DNA ligase/mRNA capping enzyme"/>
    <property type="match status" value="1"/>
</dbReference>
<dbReference type="Gene3D" id="1.10.287.610">
    <property type="entry name" value="Helix hairpin bin"/>
    <property type="match status" value="1"/>
</dbReference>
<dbReference type="Gene3D" id="2.40.50.140">
    <property type="entry name" value="Nucleic acid-binding proteins"/>
    <property type="match status" value="1"/>
</dbReference>
<dbReference type="HAMAP" id="MF_01588">
    <property type="entry name" value="DNA_ligase_A"/>
    <property type="match status" value="1"/>
</dbReference>
<dbReference type="InterPro" id="IPR001357">
    <property type="entry name" value="BRCT_dom"/>
</dbReference>
<dbReference type="InterPro" id="IPR036420">
    <property type="entry name" value="BRCT_dom_sf"/>
</dbReference>
<dbReference type="InterPro" id="IPR041663">
    <property type="entry name" value="DisA/LigA_HHH"/>
</dbReference>
<dbReference type="InterPro" id="IPR001679">
    <property type="entry name" value="DNA_ligase"/>
</dbReference>
<dbReference type="InterPro" id="IPR018239">
    <property type="entry name" value="DNA_ligase_AS"/>
</dbReference>
<dbReference type="InterPro" id="IPR033136">
    <property type="entry name" value="DNA_ligase_CS"/>
</dbReference>
<dbReference type="InterPro" id="IPR013839">
    <property type="entry name" value="DNAligase_adenylation"/>
</dbReference>
<dbReference type="InterPro" id="IPR013840">
    <property type="entry name" value="DNAligase_N"/>
</dbReference>
<dbReference type="InterPro" id="IPR003583">
    <property type="entry name" value="Hlx-hairpin-Hlx_DNA-bd_motif"/>
</dbReference>
<dbReference type="InterPro" id="IPR012340">
    <property type="entry name" value="NA-bd_OB-fold"/>
</dbReference>
<dbReference type="InterPro" id="IPR004150">
    <property type="entry name" value="NAD_DNA_ligase_OB"/>
</dbReference>
<dbReference type="InterPro" id="IPR010994">
    <property type="entry name" value="RuvA_2-like"/>
</dbReference>
<dbReference type="InterPro" id="IPR004149">
    <property type="entry name" value="Znf_DNAligase_C4"/>
</dbReference>
<dbReference type="NCBIfam" id="TIGR00575">
    <property type="entry name" value="dnlj"/>
    <property type="match status" value="1"/>
</dbReference>
<dbReference type="NCBIfam" id="NF005932">
    <property type="entry name" value="PRK07956.1"/>
    <property type="match status" value="1"/>
</dbReference>
<dbReference type="PANTHER" id="PTHR23389">
    <property type="entry name" value="CHROMOSOME TRANSMISSION FIDELITY FACTOR 18"/>
    <property type="match status" value="1"/>
</dbReference>
<dbReference type="PANTHER" id="PTHR23389:SF9">
    <property type="entry name" value="DNA LIGASE"/>
    <property type="match status" value="1"/>
</dbReference>
<dbReference type="Pfam" id="PF00533">
    <property type="entry name" value="BRCT"/>
    <property type="match status" value="1"/>
</dbReference>
<dbReference type="Pfam" id="PF01653">
    <property type="entry name" value="DNA_ligase_aden"/>
    <property type="match status" value="1"/>
</dbReference>
<dbReference type="Pfam" id="PF03120">
    <property type="entry name" value="DNA_ligase_OB"/>
    <property type="match status" value="1"/>
</dbReference>
<dbReference type="Pfam" id="PF03119">
    <property type="entry name" value="DNA_ligase_ZBD"/>
    <property type="match status" value="1"/>
</dbReference>
<dbReference type="Pfam" id="PF12826">
    <property type="entry name" value="HHH_2"/>
    <property type="match status" value="1"/>
</dbReference>
<dbReference type="Pfam" id="PF14520">
    <property type="entry name" value="HHH_5"/>
    <property type="match status" value="1"/>
</dbReference>
<dbReference type="Pfam" id="PF22745">
    <property type="entry name" value="Nlig-Ia"/>
    <property type="match status" value="1"/>
</dbReference>
<dbReference type="PIRSF" id="PIRSF001604">
    <property type="entry name" value="LigA"/>
    <property type="match status" value="1"/>
</dbReference>
<dbReference type="SMART" id="SM00292">
    <property type="entry name" value="BRCT"/>
    <property type="match status" value="1"/>
</dbReference>
<dbReference type="SMART" id="SM00278">
    <property type="entry name" value="HhH1"/>
    <property type="match status" value="3"/>
</dbReference>
<dbReference type="SMART" id="SM00532">
    <property type="entry name" value="LIGANc"/>
    <property type="match status" value="1"/>
</dbReference>
<dbReference type="SUPFAM" id="SSF52113">
    <property type="entry name" value="BRCT domain"/>
    <property type="match status" value="1"/>
</dbReference>
<dbReference type="SUPFAM" id="SSF56091">
    <property type="entry name" value="DNA ligase/mRNA capping enzyme, catalytic domain"/>
    <property type="match status" value="1"/>
</dbReference>
<dbReference type="SUPFAM" id="SSF50249">
    <property type="entry name" value="Nucleic acid-binding proteins"/>
    <property type="match status" value="1"/>
</dbReference>
<dbReference type="SUPFAM" id="SSF47781">
    <property type="entry name" value="RuvA domain 2-like"/>
    <property type="match status" value="1"/>
</dbReference>
<dbReference type="PROSITE" id="PS50172">
    <property type="entry name" value="BRCT"/>
    <property type="match status" value="1"/>
</dbReference>
<dbReference type="PROSITE" id="PS01055">
    <property type="entry name" value="DNA_LIGASE_N1"/>
    <property type="match status" value="1"/>
</dbReference>
<dbReference type="PROSITE" id="PS01056">
    <property type="entry name" value="DNA_LIGASE_N2"/>
    <property type="match status" value="1"/>
</dbReference>
<accession>Q9KF37</accession>
<sequence>MERNDAERKIEKLRNQLEEYGYHYYVLDKPLVSDAEYDGLMNELIELEEAFPELKSDTSPSVRVGGPPLPHFEKVEHRTPMLSLGNAFSDQDLRDFDRRVRQVVGDEVTYSCELKIDGLAISLIYESGRFVRGATRGDGTTGEDITQNLRTIPSIPLRLKEAVSLEVRGEAFMPKRSFEALNEAKEAAGEERFANPRNAAAGSLRQLDPKLAAKRHLDAFIYAIGSVEGKELHSHHEGLNYLKTIGFKINPESAYCESIDEVIDYVNSWLERRADLPYEIDGIVIKVDNVNFQEQLGYTAKSPRWAIAYKFPAEEVITTLLDITLNVGRTGVVTPTAELKPVTVAGTTVKRASLHNEDLIREKDIRLGDSVVVKKAGDIIPEVVNVLTELRTGEERPFSMPTHCPECGSELVRLEGEVALRCINPQCPAQIREGLIHFVSRQAMNIDGLGEKVITQLFEHGLIHNVADLYKLNKDELLQLERMGEKSVNNLLASIETSKKSSLERLLFGLGIRFVGSKAAKTLAMHFPTMTELRRASYDELIAVNEIGEKMAASIVSYFEKPEVNELIDELASLGVNMTYNGPKPIGEEEIADSPFAGKTVVLTGKLQALTRGEAKEKIEALGGKVTGSVSKNTDLLVAGEDAGSKLTKAKELNIEIWDEEALVKAISH</sequence>
<comment type="function">
    <text evidence="1">DNA ligase that catalyzes the formation of phosphodiester linkages between 5'-phosphoryl and 3'-hydroxyl groups in double-stranded DNA using NAD as a coenzyme and as the energy source for the reaction. It is essential for DNA replication and repair of damaged DNA.</text>
</comment>
<comment type="catalytic activity">
    <reaction evidence="1">
        <text>NAD(+) + (deoxyribonucleotide)n-3'-hydroxyl + 5'-phospho-(deoxyribonucleotide)m = (deoxyribonucleotide)n+m + AMP + beta-nicotinamide D-nucleotide.</text>
        <dbReference type="EC" id="6.5.1.2"/>
    </reaction>
</comment>
<comment type="cofactor">
    <cofactor evidence="1">
        <name>Mg(2+)</name>
        <dbReference type="ChEBI" id="CHEBI:18420"/>
    </cofactor>
    <cofactor evidence="1">
        <name>Mn(2+)</name>
        <dbReference type="ChEBI" id="CHEBI:29035"/>
    </cofactor>
</comment>
<comment type="similarity">
    <text evidence="1">Belongs to the NAD-dependent DNA ligase family. LigA subfamily.</text>
</comment>
<name>DNLJ_HALH5</name>
<organism>
    <name type="scientific">Halalkalibacterium halodurans (strain ATCC BAA-125 / DSM 18197 / FERM 7344 / JCM 9153 / C-125)</name>
    <name type="common">Bacillus halodurans</name>
    <dbReference type="NCBI Taxonomy" id="272558"/>
    <lineage>
        <taxon>Bacteria</taxon>
        <taxon>Bacillati</taxon>
        <taxon>Bacillota</taxon>
        <taxon>Bacilli</taxon>
        <taxon>Bacillales</taxon>
        <taxon>Bacillaceae</taxon>
        <taxon>Halalkalibacterium (ex Joshi et al. 2022)</taxon>
    </lineage>
</organism>
<proteinExistence type="inferred from homology"/>